<reference key="1">
    <citation type="submission" date="2007-03" db="EMBL/GenBank/DDBJ databases">
        <title>Annotation of Culex pipiens quinquefasciatus.</title>
        <authorList>
            <consortium name="The Broad Institute Genome Sequencing Platform"/>
            <person name="Atkinson P.W."/>
            <person name="Hemingway J."/>
            <person name="Christensen B.M."/>
            <person name="Higgs S."/>
            <person name="Kodira C.D."/>
            <person name="Hannick L.I."/>
            <person name="Megy K."/>
            <person name="O'Leary S.B."/>
            <person name="Pearson M."/>
            <person name="Haas B.J."/>
            <person name="Mauceli E."/>
            <person name="Wortman J.R."/>
            <person name="Lee N.H."/>
            <person name="Guigo R."/>
            <person name="Stanke M."/>
            <person name="Alvarado L."/>
            <person name="Amedeo P."/>
            <person name="Antoine C.H."/>
            <person name="Arensburger P."/>
            <person name="Bidwell S.L."/>
            <person name="Crawford M."/>
            <person name="Camaro F."/>
            <person name="Devon K."/>
            <person name="Engels R."/>
            <person name="Hammond M."/>
            <person name="Howarth C."/>
            <person name="Koehrsen M."/>
            <person name="Lawson D."/>
            <person name="Montgomery P."/>
            <person name="Nene V."/>
            <person name="Nusbaum C."/>
            <person name="Puiu D."/>
            <person name="Romero-Severson J."/>
            <person name="Severson D.W."/>
            <person name="Shumway M."/>
            <person name="Sisk P."/>
            <person name="Stolte C."/>
            <person name="Zeng Q."/>
            <person name="Eisenstadt E."/>
            <person name="Fraser-Liggett C.M."/>
            <person name="Strausberg R."/>
            <person name="Galagan J."/>
            <person name="Birren B."/>
            <person name="Collins F.H."/>
        </authorList>
    </citation>
    <scope>NUCLEOTIDE SEQUENCE [LARGE SCALE GENOMIC DNA]</scope>
    <source>
        <strain>JHB</strain>
    </source>
</reference>
<sequence>MPKKNKPAAKGPFYFFMMEFKEQEEAAGYRFSGLAEVTEKAGPHWEKLAPHEREPYNQRAKQNKANPKEAGGYGERYTAQGKPFSQVQAEAAKRRQLEEQIQKRIVEMIQTASANNALGELEVYFVSCNYFCVSLSGEYVPAELAIIKYSLNDGVMDSLNVLINPTDLPLGMALDAKTHSSSTHQLPVPPDALGEANYEKILRQILKFFKNTSGSKVVPPIFTWNKDIPMVDSILRGILEATDLDYVKFSILPLIDFFYNLKLATEDYGLDIKTFPSIHLAKALLEKDVYAYTAGIACDVHEQLNNQVACALSRVVRWAYVISDSCCLDVGIEMEKGRHLPHNMTTLSDITGTVSALSSRMSKLTTTSDNNRSKMSRPRSTDRTDRDVTTTTIYSSRAGTVTGKPSTIVPQQPASSGGTRAANDTFNTTNPFYAMQMAQSANRSPTKKNPWSRENKLTEVRDPQSDTETSMLMLAPVAGRGRGTLARMNAAGRGRAQDLCTTVKTVGRGHLN</sequence>
<name>MAEL_CULQU</name>
<comment type="function">
    <text evidence="1">Plays a central role during gametogenesis by repressing transposable elements and preventing their mobilization, which is essential for the germline integrity. Probably acts via the piRNA metabolic process, which mediates the repression of transposable elements during meiosis by forming complexes composed of piRNAs and Piwi proteins and governs the repression of transposons (By similarity).</text>
</comment>
<comment type="subcellular location">
    <subcellularLocation>
        <location>Cytoplasm</location>
    </subcellularLocation>
    <subcellularLocation>
        <location>Nucleus</location>
    </subcellularLocation>
    <text evidence="1">Component of the meiotic nuage, also named P granule, a germ-cell-specific organelle required to repress transposon activity during meiosis.</text>
</comment>
<comment type="similarity">
    <text evidence="4">Belongs to the maelstrom family.</text>
</comment>
<accession>B0W2W6</accession>
<feature type="chain" id="PRO_0000367294" description="Protein maelstrom homolog">
    <location>
        <begin position="1"/>
        <end position="512"/>
    </location>
</feature>
<feature type="DNA-binding region" description="HMG box" evidence="2">
    <location>
        <begin position="9"/>
        <end position="75"/>
    </location>
</feature>
<feature type="region of interest" description="Disordered" evidence="3">
    <location>
        <begin position="49"/>
        <end position="72"/>
    </location>
</feature>
<feature type="region of interest" description="Disordered" evidence="3">
    <location>
        <begin position="360"/>
        <end position="421"/>
    </location>
</feature>
<feature type="region of interest" description="Disordered" evidence="3">
    <location>
        <begin position="439"/>
        <end position="465"/>
    </location>
</feature>
<feature type="compositionally biased region" description="Polar residues" evidence="3">
    <location>
        <begin position="360"/>
        <end position="370"/>
    </location>
</feature>
<feature type="compositionally biased region" description="Basic and acidic residues" evidence="3">
    <location>
        <begin position="379"/>
        <end position="388"/>
    </location>
</feature>
<feature type="compositionally biased region" description="Polar residues" evidence="3">
    <location>
        <begin position="393"/>
        <end position="421"/>
    </location>
</feature>
<feature type="compositionally biased region" description="Polar residues" evidence="3">
    <location>
        <begin position="439"/>
        <end position="449"/>
    </location>
</feature>
<feature type="compositionally biased region" description="Basic and acidic residues" evidence="3">
    <location>
        <begin position="451"/>
        <end position="464"/>
    </location>
</feature>
<proteinExistence type="inferred from homology"/>
<evidence type="ECO:0000250" key="1"/>
<evidence type="ECO:0000255" key="2">
    <source>
        <dbReference type="PROSITE-ProRule" id="PRU00267"/>
    </source>
</evidence>
<evidence type="ECO:0000256" key="3">
    <source>
        <dbReference type="SAM" id="MobiDB-lite"/>
    </source>
</evidence>
<evidence type="ECO:0000305" key="4"/>
<dbReference type="EMBL" id="DS231829">
    <property type="protein sequence ID" value="EDS30325.1"/>
    <property type="molecule type" value="Genomic_DNA"/>
</dbReference>
<dbReference type="SMR" id="B0W2W6"/>
<dbReference type="FunCoup" id="B0W2W6">
    <property type="interactions" value="49"/>
</dbReference>
<dbReference type="STRING" id="7176.B0W2W6"/>
<dbReference type="EnsemblMetazoa" id="CPIJ001566-RA">
    <property type="protein sequence ID" value="CPIJ001566-PA"/>
    <property type="gene ID" value="CPIJ001566"/>
</dbReference>
<dbReference type="EnsemblMetazoa" id="CQUJHB008892.R13706">
    <property type="protein sequence ID" value="CQUJHB008892.P13706"/>
    <property type="gene ID" value="CQUJHB008892"/>
</dbReference>
<dbReference type="EnsemblMetazoa" id="XM_001842998.2">
    <property type="protein sequence ID" value="XP_001843050.1"/>
    <property type="gene ID" value="LOC6032454"/>
</dbReference>
<dbReference type="GeneID" id="6032454"/>
<dbReference type="KEGG" id="cqu:CpipJ_CPIJ001566"/>
<dbReference type="VEuPathDB" id="VectorBase:CPIJ001566"/>
<dbReference type="VEuPathDB" id="VectorBase:CQUJHB008892"/>
<dbReference type="eggNOG" id="ENOG502QTQB">
    <property type="taxonomic scope" value="Eukaryota"/>
</dbReference>
<dbReference type="HOGENOM" id="CLU_030062_0_0_1"/>
<dbReference type="InParanoid" id="B0W2W6"/>
<dbReference type="OMA" id="KHEIFDH"/>
<dbReference type="OrthoDB" id="24555at2759"/>
<dbReference type="PhylomeDB" id="B0W2W6"/>
<dbReference type="Proteomes" id="UP000002320">
    <property type="component" value="Unassembled WGS sequence"/>
</dbReference>
<dbReference type="GO" id="GO:0005634">
    <property type="term" value="C:nucleus"/>
    <property type="evidence" value="ECO:0007669"/>
    <property type="project" value="UniProtKB-SubCell"/>
</dbReference>
<dbReference type="GO" id="GO:0043186">
    <property type="term" value="C:P granule"/>
    <property type="evidence" value="ECO:0007669"/>
    <property type="project" value="TreeGrafter"/>
</dbReference>
<dbReference type="GO" id="GO:0043565">
    <property type="term" value="F:sequence-specific DNA binding"/>
    <property type="evidence" value="ECO:0007669"/>
    <property type="project" value="TreeGrafter"/>
</dbReference>
<dbReference type="GO" id="GO:0030154">
    <property type="term" value="P:cell differentiation"/>
    <property type="evidence" value="ECO:0007669"/>
    <property type="project" value="UniProtKB-KW"/>
</dbReference>
<dbReference type="GO" id="GO:0007140">
    <property type="term" value="P:male meiotic nuclear division"/>
    <property type="evidence" value="ECO:0007669"/>
    <property type="project" value="TreeGrafter"/>
</dbReference>
<dbReference type="GO" id="GO:0045892">
    <property type="term" value="P:negative regulation of DNA-templated transcription"/>
    <property type="evidence" value="ECO:0007669"/>
    <property type="project" value="TreeGrafter"/>
</dbReference>
<dbReference type="GO" id="GO:0034587">
    <property type="term" value="P:piRNA processing"/>
    <property type="evidence" value="ECO:0007669"/>
    <property type="project" value="TreeGrafter"/>
</dbReference>
<dbReference type="GO" id="GO:0060964">
    <property type="term" value="P:regulation of miRNA-mediated gene silencing"/>
    <property type="evidence" value="ECO:0007669"/>
    <property type="project" value="InterPro"/>
</dbReference>
<dbReference type="GO" id="GO:0007283">
    <property type="term" value="P:spermatogenesis"/>
    <property type="evidence" value="ECO:0007669"/>
    <property type="project" value="TreeGrafter"/>
</dbReference>
<dbReference type="CDD" id="cd21992">
    <property type="entry name" value="HMG-box_MAEL"/>
    <property type="match status" value="1"/>
</dbReference>
<dbReference type="Gene3D" id="1.10.30.10">
    <property type="entry name" value="High mobility group box domain"/>
    <property type="match status" value="1"/>
</dbReference>
<dbReference type="InterPro" id="IPR009071">
    <property type="entry name" value="HMG_box_dom"/>
</dbReference>
<dbReference type="InterPro" id="IPR036910">
    <property type="entry name" value="HMG_box_dom_sf"/>
</dbReference>
<dbReference type="InterPro" id="IPR024970">
    <property type="entry name" value="Maelstrom"/>
</dbReference>
<dbReference type="InterPro" id="IPR039259">
    <property type="entry name" value="Protein_maelstrom"/>
</dbReference>
<dbReference type="PANTHER" id="PTHR21358">
    <property type="entry name" value="PROTEIN MAELSTROM HOMOLOG"/>
    <property type="match status" value="1"/>
</dbReference>
<dbReference type="PANTHER" id="PTHR21358:SF4">
    <property type="entry name" value="PROTEIN MAELSTROM HOMOLOG"/>
    <property type="match status" value="1"/>
</dbReference>
<dbReference type="Pfam" id="PF09011">
    <property type="entry name" value="HMG_box_2"/>
    <property type="match status" value="1"/>
</dbReference>
<dbReference type="Pfam" id="PF13017">
    <property type="entry name" value="Maelstrom"/>
    <property type="match status" value="1"/>
</dbReference>
<dbReference type="SUPFAM" id="SSF47095">
    <property type="entry name" value="HMG-box"/>
    <property type="match status" value="1"/>
</dbReference>
<dbReference type="PROSITE" id="PS50118">
    <property type="entry name" value="HMG_BOX_2"/>
    <property type="match status" value="1"/>
</dbReference>
<keyword id="KW-0963">Cytoplasm</keyword>
<keyword id="KW-0217">Developmental protein</keyword>
<keyword id="KW-0221">Differentiation</keyword>
<keyword id="KW-0238">DNA-binding</keyword>
<keyword id="KW-0469">Meiosis</keyword>
<keyword id="KW-0539">Nucleus</keyword>
<keyword id="KW-1185">Reference proteome</keyword>
<keyword id="KW-0943">RNA-mediated gene silencing</keyword>
<organism>
    <name type="scientific">Culex quinquefasciatus</name>
    <name type="common">Southern house mosquito</name>
    <name type="synonym">Culex pungens</name>
    <dbReference type="NCBI Taxonomy" id="7176"/>
    <lineage>
        <taxon>Eukaryota</taxon>
        <taxon>Metazoa</taxon>
        <taxon>Ecdysozoa</taxon>
        <taxon>Arthropoda</taxon>
        <taxon>Hexapoda</taxon>
        <taxon>Insecta</taxon>
        <taxon>Pterygota</taxon>
        <taxon>Neoptera</taxon>
        <taxon>Endopterygota</taxon>
        <taxon>Diptera</taxon>
        <taxon>Nematocera</taxon>
        <taxon>Culicoidea</taxon>
        <taxon>Culicidae</taxon>
        <taxon>Culicinae</taxon>
        <taxon>Culicini</taxon>
        <taxon>Culex</taxon>
        <taxon>Culex</taxon>
    </lineage>
</organism>
<gene>
    <name type="primary">mael</name>
    <name type="ORF">CPIJ001566</name>
</gene>
<protein>
    <recommendedName>
        <fullName>Protein maelstrom homolog</fullName>
    </recommendedName>
</protein>